<organism>
    <name type="scientific">Nitratidesulfovibrio vulgaris (strain DSM 19637 / Miyazaki F)</name>
    <name type="common">Desulfovibrio vulgaris</name>
    <dbReference type="NCBI Taxonomy" id="883"/>
    <lineage>
        <taxon>Bacteria</taxon>
        <taxon>Pseudomonadati</taxon>
        <taxon>Thermodesulfobacteriota</taxon>
        <taxon>Desulfovibrionia</taxon>
        <taxon>Desulfovibrionales</taxon>
        <taxon>Desulfovibrionaceae</taxon>
        <taxon>Nitratidesulfovibrio</taxon>
    </lineage>
</organism>
<sequence length="428" mass="46218">MSNVVVMGAQWGDEGKGKIVDLLTRKCDVIVRFQGGNNAGHTVLVGDKQYILHLIPSGILHPGKKCLIGNGVVLDPAVFCREVETLRDKDVDVSPARLMISRKAHVIMPYHKALDVARECHKTNESKIGTTGRGIGPCYEDKMSRIGIRAADLAMPELLRAKIEAALLEKNALLAGLYGGETMTVDAVFDEVMAVAPRVVPHLADVTAEIEAAWAAGQHVMFEGAQGTHLDIDHGTYPFVTSSNTVSGNASAGSGIAPTRLDRIVAIVKAYTTRVGAGPFPTEQLNEAGDYLQQKGHEFGATTGRKRRCGWLDAVVLREAVRLNGPTDIALTKLDVLSGLKELKICTAYEYQGGTITVAPQEQNGMAHVTPVYETMPGWDDDITGCTTWESLPAPTRAYIARIEELTGVRVSLVSVGPERDQTINRGW</sequence>
<accession>B8DQ18</accession>
<dbReference type="EC" id="6.3.4.4" evidence="1"/>
<dbReference type="EMBL" id="CP001197">
    <property type="protein sequence ID" value="ACL08882.1"/>
    <property type="molecule type" value="Genomic_DNA"/>
</dbReference>
<dbReference type="SMR" id="B8DQ18"/>
<dbReference type="STRING" id="883.DvMF_1939"/>
<dbReference type="KEGG" id="dvm:DvMF_1939"/>
<dbReference type="eggNOG" id="COG0104">
    <property type="taxonomic scope" value="Bacteria"/>
</dbReference>
<dbReference type="HOGENOM" id="CLU_029848_0_0_7"/>
<dbReference type="OrthoDB" id="9807553at2"/>
<dbReference type="UniPathway" id="UPA00075">
    <property type="reaction ID" value="UER00335"/>
</dbReference>
<dbReference type="GO" id="GO:0005737">
    <property type="term" value="C:cytoplasm"/>
    <property type="evidence" value="ECO:0007669"/>
    <property type="project" value="UniProtKB-SubCell"/>
</dbReference>
<dbReference type="GO" id="GO:0004019">
    <property type="term" value="F:adenylosuccinate synthase activity"/>
    <property type="evidence" value="ECO:0007669"/>
    <property type="project" value="UniProtKB-UniRule"/>
</dbReference>
<dbReference type="GO" id="GO:0005525">
    <property type="term" value="F:GTP binding"/>
    <property type="evidence" value="ECO:0007669"/>
    <property type="project" value="UniProtKB-UniRule"/>
</dbReference>
<dbReference type="GO" id="GO:0000287">
    <property type="term" value="F:magnesium ion binding"/>
    <property type="evidence" value="ECO:0007669"/>
    <property type="project" value="UniProtKB-UniRule"/>
</dbReference>
<dbReference type="GO" id="GO:0044208">
    <property type="term" value="P:'de novo' AMP biosynthetic process"/>
    <property type="evidence" value="ECO:0007669"/>
    <property type="project" value="UniProtKB-UniRule"/>
</dbReference>
<dbReference type="GO" id="GO:0046040">
    <property type="term" value="P:IMP metabolic process"/>
    <property type="evidence" value="ECO:0007669"/>
    <property type="project" value="TreeGrafter"/>
</dbReference>
<dbReference type="CDD" id="cd03108">
    <property type="entry name" value="AdSS"/>
    <property type="match status" value="1"/>
</dbReference>
<dbReference type="FunFam" id="1.10.300.10:FF:000001">
    <property type="entry name" value="Adenylosuccinate synthetase"/>
    <property type="match status" value="1"/>
</dbReference>
<dbReference type="FunFam" id="3.90.170.10:FF:000001">
    <property type="entry name" value="Adenylosuccinate synthetase"/>
    <property type="match status" value="1"/>
</dbReference>
<dbReference type="Gene3D" id="3.40.440.10">
    <property type="entry name" value="Adenylosuccinate Synthetase, subunit A, domain 1"/>
    <property type="match status" value="1"/>
</dbReference>
<dbReference type="Gene3D" id="1.10.300.10">
    <property type="entry name" value="Adenylosuccinate Synthetase, subunit A, domain 2"/>
    <property type="match status" value="1"/>
</dbReference>
<dbReference type="Gene3D" id="3.90.170.10">
    <property type="entry name" value="Adenylosuccinate Synthetase, subunit A, domain 3"/>
    <property type="match status" value="1"/>
</dbReference>
<dbReference type="HAMAP" id="MF_00011">
    <property type="entry name" value="Adenylosucc_synth"/>
    <property type="match status" value="1"/>
</dbReference>
<dbReference type="InterPro" id="IPR018220">
    <property type="entry name" value="Adenylosuccin_syn_GTP-bd"/>
</dbReference>
<dbReference type="InterPro" id="IPR033128">
    <property type="entry name" value="Adenylosuccin_syn_Lys_AS"/>
</dbReference>
<dbReference type="InterPro" id="IPR042109">
    <property type="entry name" value="Adenylosuccinate_synth_dom1"/>
</dbReference>
<dbReference type="InterPro" id="IPR042110">
    <property type="entry name" value="Adenylosuccinate_synth_dom2"/>
</dbReference>
<dbReference type="InterPro" id="IPR042111">
    <property type="entry name" value="Adenylosuccinate_synth_dom3"/>
</dbReference>
<dbReference type="InterPro" id="IPR001114">
    <property type="entry name" value="Adenylosuccinate_synthetase"/>
</dbReference>
<dbReference type="InterPro" id="IPR027417">
    <property type="entry name" value="P-loop_NTPase"/>
</dbReference>
<dbReference type="NCBIfam" id="NF002223">
    <property type="entry name" value="PRK01117.1"/>
    <property type="match status" value="1"/>
</dbReference>
<dbReference type="NCBIfam" id="TIGR00184">
    <property type="entry name" value="purA"/>
    <property type="match status" value="1"/>
</dbReference>
<dbReference type="PANTHER" id="PTHR11846">
    <property type="entry name" value="ADENYLOSUCCINATE SYNTHETASE"/>
    <property type="match status" value="1"/>
</dbReference>
<dbReference type="PANTHER" id="PTHR11846:SF0">
    <property type="entry name" value="ADENYLOSUCCINATE SYNTHETASE"/>
    <property type="match status" value="1"/>
</dbReference>
<dbReference type="Pfam" id="PF00709">
    <property type="entry name" value="Adenylsucc_synt"/>
    <property type="match status" value="1"/>
</dbReference>
<dbReference type="SMART" id="SM00788">
    <property type="entry name" value="Adenylsucc_synt"/>
    <property type="match status" value="1"/>
</dbReference>
<dbReference type="SUPFAM" id="SSF52540">
    <property type="entry name" value="P-loop containing nucleoside triphosphate hydrolases"/>
    <property type="match status" value="1"/>
</dbReference>
<dbReference type="PROSITE" id="PS01266">
    <property type="entry name" value="ADENYLOSUCCIN_SYN_1"/>
    <property type="match status" value="1"/>
</dbReference>
<dbReference type="PROSITE" id="PS00513">
    <property type="entry name" value="ADENYLOSUCCIN_SYN_2"/>
    <property type="match status" value="1"/>
</dbReference>
<reference key="1">
    <citation type="submission" date="2008-10" db="EMBL/GenBank/DDBJ databases">
        <title>Complete sequence of Desulfovibrio vulgaris str. 'Miyazaki F'.</title>
        <authorList>
            <person name="Lucas S."/>
            <person name="Copeland A."/>
            <person name="Lapidus A."/>
            <person name="Glavina del Rio T."/>
            <person name="Dalin E."/>
            <person name="Tice H."/>
            <person name="Bruce D."/>
            <person name="Goodwin L."/>
            <person name="Pitluck S."/>
            <person name="Sims D."/>
            <person name="Brettin T."/>
            <person name="Detter J.C."/>
            <person name="Han C."/>
            <person name="Larimer F."/>
            <person name="Land M."/>
            <person name="Hauser L."/>
            <person name="Kyrpides N."/>
            <person name="Mikhailova N."/>
            <person name="Hazen T.C."/>
            <person name="Richardson P."/>
        </authorList>
    </citation>
    <scope>NUCLEOTIDE SEQUENCE [LARGE SCALE GENOMIC DNA]</scope>
    <source>
        <strain>DSM 19637 / Miyazaki F</strain>
    </source>
</reference>
<gene>
    <name evidence="1" type="primary">purA</name>
    <name type="ordered locus">DvMF_1939</name>
</gene>
<proteinExistence type="inferred from homology"/>
<evidence type="ECO:0000255" key="1">
    <source>
        <dbReference type="HAMAP-Rule" id="MF_00011"/>
    </source>
</evidence>
<feature type="chain" id="PRO_1000194749" description="Adenylosuccinate synthetase">
    <location>
        <begin position="1"/>
        <end position="428"/>
    </location>
</feature>
<feature type="active site" description="Proton acceptor" evidence="1">
    <location>
        <position position="13"/>
    </location>
</feature>
<feature type="active site" description="Proton donor" evidence="1">
    <location>
        <position position="41"/>
    </location>
</feature>
<feature type="binding site" evidence="1">
    <location>
        <begin position="12"/>
        <end position="18"/>
    </location>
    <ligand>
        <name>GTP</name>
        <dbReference type="ChEBI" id="CHEBI:37565"/>
    </ligand>
</feature>
<feature type="binding site" description="in other chain" evidence="1">
    <location>
        <begin position="13"/>
        <end position="16"/>
    </location>
    <ligand>
        <name>IMP</name>
        <dbReference type="ChEBI" id="CHEBI:58053"/>
        <note>ligand shared between dimeric partners</note>
    </ligand>
</feature>
<feature type="binding site" evidence="1">
    <location>
        <position position="13"/>
    </location>
    <ligand>
        <name>Mg(2+)</name>
        <dbReference type="ChEBI" id="CHEBI:18420"/>
    </ligand>
</feature>
<feature type="binding site" description="in other chain" evidence="1">
    <location>
        <begin position="38"/>
        <end position="41"/>
    </location>
    <ligand>
        <name>IMP</name>
        <dbReference type="ChEBI" id="CHEBI:58053"/>
        <note>ligand shared between dimeric partners</note>
    </ligand>
</feature>
<feature type="binding site" evidence="1">
    <location>
        <begin position="40"/>
        <end position="42"/>
    </location>
    <ligand>
        <name>GTP</name>
        <dbReference type="ChEBI" id="CHEBI:37565"/>
    </ligand>
</feature>
<feature type="binding site" evidence="1">
    <location>
        <position position="40"/>
    </location>
    <ligand>
        <name>Mg(2+)</name>
        <dbReference type="ChEBI" id="CHEBI:18420"/>
    </ligand>
</feature>
<feature type="binding site" description="in other chain" evidence="1">
    <location>
        <position position="131"/>
    </location>
    <ligand>
        <name>IMP</name>
        <dbReference type="ChEBI" id="CHEBI:58053"/>
        <note>ligand shared between dimeric partners</note>
    </ligand>
</feature>
<feature type="binding site" evidence="1">
    <location>
        <position position="145"/>
    </location>
    <ligand>
        <name>IMP</name>
        <dbReference type="ChEBI" id="CHEBI:58053"/>
        <note>ligand shared between dimeric partners</note>
    </ligand>
</feature>
<feature type="binding site" description="in other chain" evidence="1">
    <location>
        <position position="226"/>
    </location>
    <ligand>
        <name>IMP</name>
        <dbReference type="ChEBI" id="CHEBI:58053"/>
        <note>ligand shared between dimeric partners</note>
    </ligand>
</feature>
<feature type="binding site" description="in other chain" evidence="1">
    <location>
        <position position="241"/>
    </location>
    <ligand>
        <name>IMP</name>
        <dbReference type="ChEBI" id="CHEBI:58053"/>
        <note>ligand shared between dimeric partners</note>
    </ligand>
</feature>
<feature type="binding site" evidence="1">
    <location>
        <begin position="301"/>
        <end position="307"/>
    </location>
    <ligand>
        <name>substrate</name>
    </ligand>
</feature>
<feature type="binding site" description="in other chain" evidence="1">
    <location>
        <position position="305"/>
    </location>
    <ligand>
        <name>IMP</name>
        <dbReference type="ChEBI" id="CHEBI:58053"/>
        <note>ligand shared between dimeric partners</note>
    </ligand>
</feature>
<feature type="binding site" evidence="1">
    <location>
        <position position="307"/>
    </location>
    <ligand>
        <name>GTP</name>
        <dbReference type="ChEBI" id="CHEBI:37565"/>
    </ligand>
</feature>
<feature type="binding site" evidence="1">
    <location>
        <begin position="333"/>
        <end position="335"/>
    </location>
    <ligand>
        <name>GTP</name>
        <dbReference type="ChEBI" id="CHEBI:37565"/>
    </ligand>
</feature>
<feature type="binding site" evidence="1">
    <location>
        <begin position="415"/>
        <end position="417"/>
    </location>
    <ligand>
        <name>GTP</name>
        <dbReference type="ChEBI" id="CHEBI:37565"/>
    </ligand>
</feature>
<name>PURA_NITV9</name>
<comment type="function">
    <text evidence="1">Plays an important role in the de novo pathway of purine nucleotide biosynthesis. Catalyzes the first committed step in the biosynthesis of AMP from IMP.</text>
</comment>
<comment type="catalytic activity">
    <reaction evidence="1">
        <text>IMP + L-aspartate + GTP = N(6)-(1,2-dicarboxyethyl)-AMP + GDP + phosphate + 2 H(+)</text>
        <dbReference type="Rhea" id="RHEA:15753"/>
        <dbReference type="ChEBI" id="CHEBI:15378"/>
        <dbReference type="ChEBI" id="CHEBI:29991"/>
        <dbReference type="ChEBI" id="CHEBI:37565"/>
        <dbReference type="ChEBI" id="CHEBI:43474"/>
        <dbReference type="ChEBI" id="CHEBI:57567"/>
        <dbReference type="ChEBI" id="CHEBI:58053"/>
        <dbReference type="ChEBI" id="CHEBI:58189"/>
        <dbReference type="EC" id="6.3.4.4"/>
    </reaction>
</comment>
<comment type="cofactor">
    <cofactor evidence="1">
        <name>Mg(2+)</name>
        <dbReference type="ChEBI" id="CHEBI:18420"/>
    </cofactor>
    <text evidence="1">Binds 1 Mg(2+) ion per subunit.</text>
</comment>
<comment type="pathway">
    <text evidence="1">Purine metabolism; AMP biosynthesis via de novo pathway; AMP from IMP: step 1/2.</text>
</comment>
<comment type="subunit">
    <text evidence="1">Homodimer.</text>
</comment>
<comment type="subcellular location">
    <subcellularLocation>
        <location evidence="1">Cytoplasm</location>
    </subcellularLocation>
</comment>
<comment type="similarity">
    <text evidence="1">Belongs to the adenylosuccinate synthetase family.</text>
</comment>
<keyword id="KW-0963">Cytoplasm</keyword>
<keyword id="KW-0342">GTP-binding</keyword>
<keyword id="KW-0436">Ligase</keyword>
<keyword id="KW-0460">Magnesium</keyword>
<keyword id="KW-0479">Metal-binding</keyword>
<keyword id="KW-0547">Nucleotide-binding</keyword>
<keyword id="KW-0658">Purine biosynthesis</keyword>
<protein>
    <recommendedName>
        <fullName evidence="1">Adenylosuccinate synthetase</fullName>
        <shortName evidence="1">AMPSase</shortName>
        <shortName evidence="1">AdSS</shortName>
        <ecNumber evidence="1">6.3.4.4</ecNumber>
    </recommendedName>
    <alternativeName>
        <fullName evidence="1">IMP--aspartate ligase</fullName>
    </alternativeName>
</protein>